<evidence type="ECO:0000255" key="1">
    <source>
        <dbReference type="HAMAP-Rule" id="MF_01367"/>
    </source>
</evidence>
<evidence type="ECO:0000305" key="2"/>
<feature type="chain" id="PRO_0000266601" description="Large ribosomal subunit protein uL14">
    <location>
        <begin position="1"/>
        <end position="132"/>
    </location>
</feature>
<keyword id="KW-1185">Reference proteome</keyword>
<keyword id="KW-0687">Ribonucleoprotein</keyword>
<keyword id="KW-0689">Ribosomal protein</keyword>
<keyword id="KW-0694">RNA-binding</keyword>
<keyword id="KW-0699">rRNA-binding</keyword>
<proteinExistence type="inferred from homology"/>
<reference key="1">
    <citation type="journal article" date="2004" name="J. Bacteriol.">
        <title>Complete genome sequence of the genetically tractable hydrogenotrophic methanogen Methanococcus maripaludis.</title>
        <authorList>
            <person name="Hendrickson E.L."/>
            <person name="Kaul R."/>
            <person name="Zhou Y."/>
            <person name="Bovee D."/>
            <person name="Chapman P."/>
            <person name="Chung J."/>
            <person name="Conway de Macario E."/>
            <person name="Dodsworth J.A."/>
            <person name="Gillett W."/>
            <person name="Graham D.E."/>
            <person name="Hackett M."/>
            <person name="Haydock A.K."/>
            <person name="Kang A."/>
            <person name="Land M.L."/>
            <person name="Levy R."/>
            <person name="Lie T.J."/>
            <person name="Major T.A."/>
            <person name="Moore B.C."/>
            <person name="Porat I."/>
            <person name="Palmeiri A."/>
            <person name="Rouse G."/>
            <person name="Saenphimmachak C."/>
            <person name="Soell D."/>
            <person name="Van Dien S."/>
            <person name="Wang T."/>
            <person name="Whitman W.B."/>
            <person name="Xia Q."/>
            <person name="Zhang Y."/>
            <person name="Larimer F.W."/>
            <person name="Olson M.V."/>
            <person name="Leigh J.A."/>
        </authorList>
    </citation>
    <scope>NUCLEOTIDE SEQUENCE [LARGE SCALE GENOMIC DNA]</scope>
    <source>
        <strain>DSM 14266 / JCM 13030 / NBRC 101832 / S2 / LL</strain>
    </source>
</reference>
<protein>
    <recommendedName>
        <fullName evidence="1">Large ribosomal subunit protein uL14</fullName>
    </recommendedName>
    <alternativeName>
        <fullName evidence="2">50S ribosomal protein L14</fullName>
    </alternativeName>
</protein>
<sequence length="132" mass="14269">MKGLGSNIVRSLPNGARLVCADNTGAKELEVIAVKNYVGTVRRLPAGGVGHMVFVSVKKGTPEMRKQVLPAIIIRQKKEYRRADGTRVKFEDNAAVIVTPEGTPKGSEIKGPVSKEAAERWPGVSRLAKIIH</sequence>
<dbReference type="EMBL" id="BX950229">
    <property type="protein sequence ID" value="CAF30965.1"/>
    <property type="molecule type" value="Genomic_DNA"/>
</dbReference>
<dbReference type="RefSeq" id="WP_011171353.1">
    <property type="nucleotide sequence ID" value="NC_005791.1"/>
</dbReference>
<dbReference type="SMR" id="Q6LXE3"/>
<dbReference type="STRING" id="267377.MMP1409"/>
<dbReference type="EnsemblBacteria" id="CAF30965">
    <property type="protein sequence ID" value="CAF30965"/>
    <property type="gene ID" value="MMP1409"/>
</dbReference>
<dbReference type="KEGG" id="mmp:MMP1409"/>
<dbReference type="PATRIC" id="fig|267377.15.peg.1445"/>
<dbReference type="eggNOG" id="arCOG04095">
    <property type="taxonomic scope" value="Archaea"/>
</dbReference>
<dbReference type="HOGENOM" id="CLU_095071_3_1_2"/>
<dbReference type="OrthoDB" id="23569at2157"/>
<dbReference type="Proteomes" id="UP000000590">
    <property type="component" value="Chromosome"/>
</dbReference>
<dbReference type="GO" id="GO:0022625">
    <property type="term" value="C:cytosolic large ribosomal subunit"/>
    <property type="evidence" value="ECO:0007669"/>
    <property type="project" value="TreeGrafter"/>
</dbReference>
<dbReference type="GO" id="GO:0070180">
    <property type="term" value="F:large ribosomal subunit rRNA binding"/>
    <property type="evidence" value="ECO:0007669"/>
    <property type="project" value="TreeGrafter"/>
</dbReference>
<dbReference type="GO" id="GO:0003735">
    <property type="term" value="F:structural constituent of ribosome"/>
    <property type="evidence" value="ECO:0007669"/>
    <property type="project" value="InterPro"/>
</dbReference>
<dbReference type="GO" id="GO:0006412">
    <property type="term" value="P:translation"/>
    <property type="evidence" value="ECO:0007669"/>
    <property type="project" value="UniProtKB-UniRule"/>
</dbReference>
<dbReference type="CDD" id="cd00337">
    <property type="entry name" value="Ribosomal_uL14"/>
    <property type="match status" value="1"/>
</dbReference>
<dbReference type="FunFam" id="2.40.150.20:FF:000007">
    <property type="entry name" value="50S ribosomal protein L14"/>
    <property type="match status" value="1"/>
</dbReference>
<dbReference type="Gene3D" id="2.40.150.20">
    <property type="entry name" value="Ribosomal protein L14"/>
    <property type="match status" value="1"/>
</dbReference>
<dbReference type="HAMAP" id="MF_01367">
    <property type="entry name" value="Ribosomal_uL14"/>
    <property type="match status" value="1"/>
</dbReference>
<dbReference type="InterPro" id="IPR000218">
    <property type="entry name" value="Ribosomal_uL14"/>
</dbReference>
<dbReference type="InterPro" id="IPR019971">
    <property type="entry name" value="Ribosomal_uL14_arc"/>
</dbReference>
<dbReference type="InterPro" id="IPR019972">
    <property type="entry name" value="Ribosomal_uL14_CS"/>
</dbReference>
<dbReference type="InterPro" id="IPR036853">
    <property type="entry name" value="Ribosomal_uL14_sf"/>
</dbReference>
<dbReference type="NCBIfam" id="NF006344">
    <property type="entry name" value="PRK08571.1"/>
    <property type="match status" value="1"/>
</dbReference>
<dbReference type="NCBIfam" id="TIGR03673">
    <property type="entry name" value="uL14_arch"/>
    <property type="match status" value="1"/>
</dbReference>
<dbReference type="PANTHER" id="PTHR11761">
    <property type="entry name" value="50S/60S RIBOSOMAL PROTEIN L14/L23"/>
    <property type="match status" value="1"/>
</dbReference>
<dbReference type="PANTHER" id="PTHR11761:SF8">
    <property type="entry name" value="LARGE RIBOSOMAL SUBUNIT PROTEIN UL14"/>
    <property type="match status" value="1"/>
</dbReference>
<dbReference type="Pfam" id="PF00238">
    <property type="entry name" value="Ribosomal_L14"/>
    <property type="match status" value="1"/>
</dbReference>
<dbReference type="SMART" id="SM01374">
    <property type="entry name" value="Ribosomal_L14"/>
    <property type="match status" value="1"/>
</dbReference>
<dbReference type="SUPFAM" id="SSF50193">
    <property type="entry name" value="Ribosomal protein L14"/>
    <property type="match status" value="1"/>
</dbReference>
<dbReference type="PROSITE" id="PS00049">
    <property type="entry name" value="RIBOSOMAL_L14"/>
    <property type="match status" value="1"/>
</dbReference>
<comment type="function">
    <text evidence="1">Binds to 23S rRNA. Forms part of two intersubunit bridges in the 70S ribosome.</text>
</comment>
<comment type="subunit">
    <text evidence="1">Part of the 50S ribosomal subunit. Forms a cluster with proteins L3 and L24e, part of which may contact the 16S rRNA in 2 intersubunit bridges.</text>
</comment>
<comment type="similarity">
    <text evidence="1">Belongs to the universal ribosomal protein uL14 family.</text>
</comment>
<gene>
    <name evidence="1" type="primary">rpl14</name>
    <name type="ordered locus">MMP1409</name>
</gene>
<organism>
    <name type="scientific">Methanococcus maripaludis (strain DSM 14266 / JCM 13030 / NBRC 101832 / S2 / LL)</name>
    <dbReference type="NCBI Taxonomy" id="267377"/>
    <lineage>
        <taxon>Archaea</taxon>
        <taxon>Methanobacteriati</taxon>
        <taxon>Methanobacteriota</taxon>
        <taxon>Methanomada group</taxon>
        <taxon>Methanococci</taxon>
        <taxon>Methanococcales</taxon>
        <taxon>Methanococcaceae</taxon>
        <taxon>Methanococcus</taxon>
    </lineage>
</organism>
<name>RL14_METMP</name>
<accession>Q6LXE3</accession>